<keyword id="KW-0165">Cleavage on pair of basic residues</keyword>
<keyword id="KW-0903">Direct protein sequencing</keyword>
<keyword id="KW-1015">Disulfide bond</keyword>
<keyword id="KW-0964">Secreted</keyword>
<keyword id="KW-0732">Signal</keyword>
<keyword id="KW-0800">Toxin</keyword>
<evidence type="ECO:0000250" key="1"/>
<evidence type="ECO:0000255" key="2"/>
<protein>
    <recommendedName>
        <fullName>Augerpeptide Hhe9a</fullName>
    </recommendedName>
    <alternativeName>
        <fullName>Hhe9.1</fullName>
    </alternativeName>
</protein>
<name>TE9A_HASHE</name>
<dbReference type="GO" id="GO:0005576">
    <property type="term" value="C:extracellular region"/>
    <property type="evidence" value="ECO:0007669"/>
    <property type="project" value="UniProtKB-SubCell"/>
</dbReference>
<dbReference type="GO" id="GO:0090729">
    <property type="term" value="F:toxin activity"/>
    <property type="evidence" value="ECO:0007669"/>
    <property type="project" value="UniProtKB-KW"/>
</dbReference>
<proteinExistence type="evidence at protein level"/>
<comment type="subcellular location">
    <subcellularLocation>
        <location>Secreted</location>
    </subcellularLocation>
</comment>
<comment type="tissue specificity">
    <text>Expressed by the venom duct.</text>
</comment>
<comment type="domain">
    <text>The cysteine framework is IX (C-C-C-C-C-C).</text>
</comment>
<reference key="1">
    <citation type="journal article" date="2007" name="J. Exp. Zool. B Mol. Dev. Evol.">
        <title>Venomous auger snail Hastula (Impages) hectica (Linnaeus, 1758): molecular phylogeny, foregut anatomy and comparative toxinology.</title>
        <authorList>
            <person name="Imperial J.S."/>
            <person name="Kantor Y."/>
            <person name="Watkins M."/>
            <person name="Heralde F.M. III"/>
            <person name="Stevenson B."/>
            <person name="Chen P."/>
            <person name="Hansson K."/>
            <person name="Stenflo J."/>
            <person name="Ownby J.P."/>
            <person name="Bouchet P."/>
            <person name="Olivera B.M."/>
        </authorList>
    </citation>
    <scope>NUCLEOTIDE SEQUENCE [MRNA]</scope>
    <scope>PROTEIN SEQUENCE OF 52-88</scope>
    <source>
        <tissue>Venom</tissue>
        <tissue>Venom duct</tissue>
    </source>
</reference>
<accession>P0CI14</accession>
<organism>
    <name type="scientific">Hastula hectica</name>
    <name type="common">Sea snail</name>
    <name type="synonym">Impages hectica</name>
    <dbReference type="NCBI Taxonomy" id="745793"/>
    <lineage>
        <taxon>Eukaryota</taxon>
        <taxon>Metazoa</taxon>
        <taxon>Spiralia</taxon>
        <taxon>Lophotrochozoa</taxon>
        <taxon>Mollusca</taxon>
        <taxon>Gastropoda</taxon>
        <taxon>Caenogastropoda</taxon>
        <taxon>Neogastropoda</taxon>
        <taxon>Conoidea</taxon>
        <taxon>Terebridae</taxon>
        <taxon>Hastula</taxon>
    </lineage>
</organism>
<feature type="signal peptide" evidence="2">
    <location>
        <begin position="1"/>
        <end position="21"/>
    </location>
</feature>
<feature type="propeptide" id="PRO_0000402146">
    <location>
        <begin position="22"/>
        <end position="49"/>
    </location>
</feature>
<feature type="chain" id="PRO_0000402147" description="Augerpeptide Hhe9a">
    <location>
        <begin position="52"/>
        <end position="88"/>
    </location>
</feature>
<feature type="disulfide bond" evidence="1">
    <location>
        <begin position="56"/>
        <end position="71"/>
    </location>
</feature>
<feature type="disulfide bond" evidence="1">
    <location>
        <begin position="61"/>
        <end position="73"/>
    </location>
</feature>
<feature type="disulfide bond" evidence="1">
    <location>
        <begin position="67"/>
        <end position="86"/>
    </location>
</feature>
<sequence length="88" mass="10002">MMTKTGLVLLFAFLLVFPVSSLPMDAEAGHARLEMDKRDAGNEAWTRLLKRYEENCGTEYCTSKIGCPGRCVCKEYNYNGEITRRCRA</sequence>